<proteinExistence type="evidence at transcript level"/>
<gene>
    <name type="primary">CARD19</name>
</gene>
<feature type="chain" id="PRO_0000064926" description="Caspase recruitment domain-containing protein 19">
    <location>
        <begin position="1"/>
        <end position="183"/>
    </location>
</feature>
<feature type="transmembrane region" description="Helical" evidence="3">
    <location>
        <begin position="122"/>
        <end position="142"/>
    </location>
</feature>
<feature type="domain" description="CARD">
    <location>
        <begin position="8"/>
        <end position="99"/>
    </location>
</feature>
<feature type="disulfide bond" description="Redox-active" evidence="1">
    <location>
        <begin position="7"/>
        <end position="77"/>
    </location>
</feature>
<reference key="1">
    <citation type="journal article" date="2005" name="BMC Genomics">
        <title>Characterization of 954 bovine full-CDS cDNA sequences.</title>
        <authorList>
            <person name="Harhay G.P."/>
            <person name="Sonstegard T.S."/>
            <person name="Keele J.W."/>
            <person name="Heaton M.P."/>
            <person name="Clawson M.L."/>
            <person name="Snelling W.M."/>
            <person name="Wiedmann R.T."/>
            <person name="Van Tassell C.P."/>
            <person name="Smith T.P.L."/>
        </authorList>
    </citation>
    <scope>NUCLEOTIDE SEQUENCE [LARGE SCALE MRNA]</scope>
</reference>
<sequence length="183" mass="20560">MTEQTYCDRLVQDTPFLTSLGRLSEQQVDRIILQLNRYYPQILSNKDAEKFRNPKLSLRVRLCDLLGHLQRSGERDCQEFYRALYIHAQPLHSCLPSRHALQNSDCTELDSGNASCELSDRGPVAFLTCLGLAAGLALLIYCCPPDPKVLPGARRVLGFSPVIIDRHVSRFLLAFLTDDLGGL</sequence>
<dbReference type="EMBL" id="BT021706">
    <property type="protein sequence ID" value="AAX46553.1"/>
    <property type="molecule type" value="mRNA"/>
</dbReference>
<dbReference type="RefSeq" id="NP_001029925.1">
    <property type="nucleotide sequence ID" value="NM_001034753.1"/>
</dbReference>
<dbReference type="SMR" id="Q58D91"/>
<dbReference type="FunCoup" id="Q58D91">
    <property type="interactions" value="213"/>
</dbReference>
<dbReference type="STRING" id="9913.ENSBTAP00000056681"/>
<dbReference type="PaxDb" id="9913-ENSBTAP00000014878"/>
<dbReference type="GeneID" id="614217"/>
<dbReference type="KEGG" id="bta:614217"/>
<dbReference type="CTD" id="84270"/>
<dbReference type="eggNOG" id="ENOG502RYMQ">
    <property type="taxonomic scope" value="Eukaryota"/>
</dbReference>
<dbReference type="InParanoid" id="Q58D91"/>
<dbReference type="OrthoDB" id="8810754at2759"/>
<dbReference type="Proteomes" id="UP000009136">
    <property type="component" value="Unplaced"/>
</dbReference>
<dbReference type="GO" id="GO:0005789">
    <property type="term" value="C:endoplasmic reticulum membrane"/>
    <property type="evidence" value="ECO:0007669"/>
    <property type="project" value="UniProtKB-SubCell"/>
</dbReference>
<dbReference type="GO" id="GO:0031966">
    <property type="term" value="C:mitochondrial membrane"/>
    <property type="evidence" value="ECO:0007669"/>
    <property type="project" value="UniProtKB-SubCell"/>
</dbReference>
<dbReference type="GO" id="GO:0005739">
    <property type="term" value="C:mitochondrion"/>
    <property type="evidence" value="ECO:0000318"/>
    <property type="project" value="GO_Central"/>
</dbReference>
<dbReference type="CDD" id="cd13785">
    <property type="entry name" value="CARD_BinCARD_like"/>
    <property type="match status" value="1"/>
</dbReference>
<dbReference type="FunFam" id="1.10.533.10:FF:000015">
    <property type="entry name" value="Caspase recruitment domain-containing protein 19"/>
    <property type="match status" value="1"/>
</dbReference>
<dbReference type="Gene3D" id="1.10.533.10">
    <property type="entry name" value="Death Domain, Fas"/>
    <property type="match status" value="1"/>
</dbReference>
<dbReference type="InterPro" id="IPR043574">
    <property type="entry name" value="CARD19"/>
</dbReference>
<dbReference type="InterPro" id="IPR042146">
    <property type="entry name" value="CARD_BinCARD"/>
</dbReference>
<dbReference type="InterPro" id="IPR011029">
    <property type="entry name" value="DEATH-like_dom_sf"/>
</dbReference>
<dbReference type="PANTHER" id="PTHR34765">
    <property type="entry name" value="CASPASE RECRUITMENT DOMAIN-CONTAINING PROTEIN 19"/>
    <property type="match status" value="1"/>
</dbReference>
<dbReference type="PANTHER" id="PTHR34765:SF1">
    <property type="entry name" value="CASPASE RECRUITMENT DOMAIN-CONTAINING PROTEIN 19"/>
    <property type="match status" value="1"/>
</dbReference>
<accession>Q58D91</accession>
<evidence type="ECO:0000250" key="1"/>
<evidence type="ECO:0000250" key="2">
    <source>
        <dbReference type="UniProtKB" id="Q96LW7"/>
    </source>
</evidence>
<evidence type="ECO:0000255" key="3"/>
<name>CAR19_BOVIN</name>
<protein>
    <recommendedName>
        <fullName>Caspase recruitment domain-containing protein 19</fullName>
    </recommendedName>
    <alternativeName>
        <fullName>Bcl10-interacting CARD protein</fullName>
        <shortName>BinCARD</shortName>
    </alternativeName>
</protein>
<keyword id="KW-1015">Disulfide bond</keyword>
<keyword id="KW-0256">Endoplasmic reticulum</keyword>
<keyword id="KW-0472">Membrane</keyword>
<keyword id="KW-0496">Mitochondrion</keyword>
<keyword id="KW-1185">Reference proteome</keyword>
<keyword id="KW-0812">Transmembrane</keyword>
<keyword id="KW-1133">Transmembrane helix</keyword>
<comment type="function">
    <text evidence="2">Plays a role in inhibiting the effects of BCL10-induced activation of NF-kappa-B. May inhibit the phosphorylation of BCL10 in a CARD-dependent manner.</text>
</comment>
<comment type="subunit">
    <text evidence="2">Associates with BCL10 by CARD-CARD interaction.</text>
</comment>
<comment type="subcellular location">
    <subcellularLocation>
        <location evidence="1">Endoplasmic reticulum membrane</location>
        <topology evidence="1">Single-pass membrane protein</topology>
    </subcellularLocation>
    <subcellularLocation>
        <location evidence="1">Mitochondrion membrane</location>
        <topology>Single-pass membrane protein</topology>
    </subcellularLocation>
</comment>
<organism>
    <name type="scientific">Bos taurus</name>
    <name type="common">Bovine</name>
    <dbReference type="NCBI Taxonomy" id="9913"/>
    <lineage>
        <taxon>Eukaryota</taxon>
        <taxon>Metazoa</taxon>
        <taxon>Chordata</taxon>
        <taxon>Craniata</taxon>
        <taxon>Vertebrata</taxon>
        <taxon>Euteleostomi</taxon>
        <taxon>Mammalia</taxon>
        <taxon>Eutheria</taxon>
        <taxon>Laurasiatheria</taxon>
        <taxon>Artiodactyla</taxon>
        <taxon>Ruminantia</taxon>
        <taxon>Pecora</taxon>
        <taxon>Bovidae</taxon>
        <taxon>Bovinae</taxon>
        <taxon>Bos</taxon>
    </lineage>
</organism>